<comment type="function">
    <text evidence="1">Catalyzes the hydrolysis of esters.</text>
</comment>
<comment type="catalytic activity">
    <reaction evidence="1">
        <text>a carboxylic ester + H2O = an alcohol + a carboxylate + H(+)</text>
        <dbReference type="Rhea" id="RHEA:21164"/>
        <dbReference type="ChEBI" id="CHEBI:15377"/>
        <dbReference type="ChEBI" id="CHEBI:15378"/>
        <dbReference type="ChEBI" id="CHEBI:29067"/>
        <dbReference type="ChEBI" id="CHEBI:30879"/>
        <dbReference type="ChEBI" id="CHEBI:33308"/>
        <dbReference type="EC" id="3.1.1.1"/>
    </reaction>
</comment>
<comment type="similarity">
    <text evidence="1">Belongs to the FrsA family.</text>
</comment>
<dbReference type="EC" id="3.1.1.1" evidence="1"/>
<dbReference type="EMBL" id="BX950851">
    <property type="protein sequence ID" value="CAG76364.1"/>
    <property type="molecule type" value="Genomic_DNA"/>
</dbReference>
<dbReference type="RefSeq" id="WP_011094973.1">
    <property type="nucleotide sequence ID" value="NC_004547.2"/>
</dbReference>
<dbReference type="SMR" id="Q6D1I1"/>
<dbReference type="STRING" id="218491.ECA3465"/>
<dbReference type="ESTHER" id="erwct-Y3465">
    <property type="family name" value="Duf_1100-R"/>
</dbReference>
<dbReference type="GeneID" id="57210134"/>
<dbReference type="KEGG" id="eca:ECA3465"/>
<dbReference type="PATRIC" id="fig|218491.5.peg.3505"/>
<dbReference type="eggNOG" id="COG1073">
    <property type="taxonomic scope" value="Bacteria"/>
</dbReference>
<dbReference type="HOGENOM" id="CLU_036819_0_0_6"/>
<dbReference type="OrthoDB" id="5590073at2"/>
<dbReference type="Proteomes" id="UP000007966">
    <property type="component" value="Chromosome"/>
</dbReference>
<dbReference type="GO" id="GO:0106435">
    <property type="term" value="F:carboxylesterase activity"/>
    <property type="evidence" value="ECO:0007669"/>
    <property type="project" value="UniProtKB-EC"/>
</dbReference>
<dbReference type="Gene3D" id="3.40.50.1820">
    <property type="entry name" value="alpha/beta hydrolase"/>
    <property type="match status" value="1"/>
</dbReference>
<dbReference type="HAMAP" id="MF_01063">
    <property type="entry name" value="FrsA"/>
    <property type="match status" value="1"/>
</dbReference>
<dbReference type="InterPro" id="IPR029058">
    <property type="entry name" value="AB_hydrolase_fold"/>
</dbReference>
<dbReference type="InterPro" id="IPR043423">
    <property type="entry name" value="FrsA"/>
</dbReference>
<dbReference type="InterPro" id="IPR010520">
    <property type="entry name" value="FrsA-like"/>
</dbReference>
<dbReference type="InterPro" id="IPR050261">
    <property type="entry name" value="FrsA_esterase"/>
</dbReference>
<dbReference type="NCBIfam" id="NF003460">
    <property type="entry name" value="PRK05077.1"/>
    <property type="match status" value="1"/>
</dbReference>
<dbReference type="PANTHER" id="PTHR22946">
    <property type="entry name" value="DIENELACTONE HYDROLASE DOMAIN-CONTAINING PROTEIN-RELATED"/>
    <property type="match status" value="1"/>
</dbReference>
<dbReference type="PANTHER" id="PTHR22946:SF4">
    <property type="entry name" value="ESTERASE FRSA"/>
    <property type="match status" value="1"/>
</dbReference>
<dbReference type="Pfam" id="PF06500">
    <property type="entry name" value="FrsA-like"/>
    <property type="match status" value="1"/>
</dbReference>
<dbReference type="SUPFAM" id="SSF53474">
    <property type="entry name" value="alpha/beta-Hydrolases"/>
    <property type="match status" value="1"/>
</dbReference>
<name>FRSA_PECAS</name>
<proteinExistence type="inferred from homology"/>
<evidence type="ECO:0000255" key="1">
    <source>
        <dbReference type="HAMAP-Rule" id="MF_01063"/>
    </source>
</evidence>
<evidence type="ECO:0000256" key="2">
    <source>
        <dbReference type="SAM" id="MobiDB-lite"/>
    </source>
</evidence>
<protein>
    <recommendedName>
        <fullName evidence="1">Esterase FrsA</fullName>
        <ecNumber evidence="1">3.1.1.1</ecNumber>
    </recommendedName>
</protein>
<feature type="chain" id="PRO_1000064483" description="Esterase FrsA">
    <location>
        <begin position="1"/>
        <end position="416"/>
    </location>
</feature>
<feature type="region of interest" description="Disordered" evidence="2">
    <location>
        <begin position="19"/>
        <end position="39"/>
    </location>
</feature>
<accession>Q6D1I1</accession>
<reference key="1">
    <citation type="journal article" date="2004" name="Proc. Natl. Acad. Sci. U.S.A.">
        <title>Genome sequence of the enterobacterial phytopathogen Erwinia carotovora subsp. atroseptica and characterization of virulence factors.</title>
        <authorList>
            <person name="Bell K.S."/>
            <person name="Sebaihia M."/>
            <person name="Pritchard L."/>
            <person name="Holden M.T.G."/>
            <person name="Hyman L.J."/>
            <person name="Holeva M.C."/>
            <person name="Thomson N.R."/>
            <person name="Bentley S.D."/>
            <person name="Churcher L.J.C."/>
            <person name="Mungall K."/>
            <person name="Atkin R."/>
            <person name="Bason N."/>
            <person name="Brooks K."/>
            <person name="Chillingworth T."/>
            <person name="Clark K."/>
            <person name="Doggett J."/>
            <person name="Fraser A."/>
            <person name="Hance Z."/>
            <person name="Hauser H."/>
            <person name="Jagels K."/>
            <person name="Moule S."/>
            <person name="Norbertczak H."/>
            <person name="Ormond D."/>
            <person name="Price C."/>
            <person name="Quail M.A."/>
            <person name="Sanders M."/>
            <person name="Walker D."/>
            <person name="Whitehead S."/>
            <person name="Salmond G.P.C."/>
            <person name="Birch P.R.J."/>
            <person name="Parkhill J."/>
            <person name="Toth I.K."/>
        </authorList>
    </citation>
    <scope>NUCLEOTIDE SEQUENCE [LARGE SCALE GENOMIC DNA]</scope>
    <source>
        <strain>SCRI 1043 / ATCC BAA-672</strain>
    </source>
</reference>
<keyword id="KW-0378">Hydrolase</keyword>
<keyword id="KW-1185">Reference proteome</keyword>
<keyword id="KW-0719">Serine esterase</keyword>
<gene>
    <name evidence="1" type="primary">frsA</name>
    <name type="ordered locus">ECA3465</name>
</gene>
<sequence length="416" mass="47062">MAQANLSETLFKPSFKHRETSTLVRRTRHDQETQGLHSTLEGEKTSSWYRMINRLMWIWRGVNPWEIEDVLSRIAASQADRSNEQLLDTVIGYRGGNWIYEWAKQGADWQQRATESGDDAQTGQFWLNAANLYSIAAYPHIKGDELAEQAQTLANRAYEEAAKYLPYELKELTFPIAGGGTLTGFLHMPSQGKAPFPTVLMCGSLETLQSDYHRLFQDYFAPAGMAMLTIDVPSVGFSSRWKLTQDSSFLHQQVLRALPDVPWVDHCRVTAFGFRFGANIAVRLAYLESQRLRGVACLGPVVHHLLSDPNRQQQVPDMFMDVLASRLGMPFSTDASLKTELGRYSLKTQGLLGRRCPTPMLAGYWENDLLCPKEEASLIVNSSAQGKLMPVNFSPVYQNFDRALQQISRWLQDKVC</sequence>
<organism>
    <name type="scientific">Pectobacterium atrosepticum (strain SCRI 1043 / ATCC BAA-672)</name>
    <name type="common">Erwinia carotovora subsp. atroseptica</name>
    <dbReference type="NCBI Taxonomy" id="218491"/>
    <lineage>
        <taxon>Bacteria</taxon>
        <taxon>Pseudomonadati</taxon>
        <taxon>Pseudomonadota</taxon>
        <taxon>Gammaproteobacteria</taxon>
        <taxon>Enterobacterales</taxon>
        <taxon>Pectobacteriaceae</taxon>
        <taxon>Pectobacterium</taxon>
    </lineage>
</organism>